<sequence>MEARDILKRPVITEKSSEAMAEDKYTFDVDTRVNKTQVKMAVEEIFNVKVASVNIMNYKPKKKRMGRYQGYTNKRRKAIVTLKEGSIDLFN</sequence>
<accession>Q7A459</accession>
<keyword id="KW-0687">Ribonucleoprotein</keyword>
<keyword id="KW-0689">Ribosomal protein</keyword>
<keyword id="KW-0694">RNA-binding</keyword>
<keyword id="KW-0699">rRNA-binding</keyword>
<proteinExistence type="evidence at protein level"/>
<feature type="chain" id="PRO_0000224172" description="Large ribosomal subunit protein uL23">
    <location>
        <begin position="1"/>
        <end position="91"/>
    </location>
</feature>
<evidence type="ECO:0000255" key="1">
    <source>
        <dbReference type="HAMAP-Rule" id="MF_01369"/>
    </source>
</evidence>
<evidence type="ECO:0000305" key="2"/>
<gene>
    <name evidence="1" type="primary">rplW</name>
    <name type="ordered locus">SA2045</name>
</gene>
<name>RL23_STAAN</name>
<reference key="1">
    <citation type="journal article" date="2001" name="Lancet">
        <title>Whole genome sequencing of meticillin-resistant Staphylococcus aureus.</title>
        <authorList>
            <person name="Kuroda M."/>
            <person name="Ohta T."/>
            <person name="Uchiyama I."/>
            <person name="Baba T."/>
            <person name="Yuzawa H."/>
            <person name="Kobayashi I."/>
            <person name="Cui L."/>
            <person name="Oguchi A."/>
            <person name="Aoki K."/>
            <person name="Nagai Y."/>
            <person name="Lian J.-Q."/>
            <person name="Ito T."/>
            <person name="Kanamori M."/>
            <person name="Matsumaru H."/>
            <person name="Maruyama A."/>
            <person name="Murakami H."/>
            <person name="Hosoyama A."/>
            <person name="Mizutani-Ui Y."/>
            <person name="Takahashi N.K."/>
            <person name="Sawano T."/>
            <person name="Inoue R."/>
            <person name="Kaito C."/>
            <person name="Sekimizu K."/>
            <person name="Hirakawa H."/>
            <person name="Kuhara S."/>
            <person name="Goto S."/>
            <person name="Yabuzaki J."/>
            <person name="Kanehisa M."/>
            <person name="Yamashita A."/>
            <person name="Oshima K."/>
            <person name="Furuya K."/>
            <person name="Yoshino C."/>
            <person name="Shiba T."/>
            <person name="Hattori M."/>
            <person name="Ogasawara N."/>
            <person name="Hayashi H."/>
            <person name="Hiramatsu K."/>
        </authorList>
    </citation>
    <scope>NUCLEOTIDE SEQUENCE [LARGE SCALE GENOMIC DNA]</scope>
    <source>
        <strain>N315</strain>
    </source>
</reference>
<reference key="2">
    <citation type="submission" date="2007-10" db="UniProtKB">
        <title>Shotgun proteomic analysis of total and membrane protein extracts of S. aureus strain N315.</title>
        <authorList>
            <person name="Vaezzadeh A.R."/>
            <person name="Deshusses J."/>
            <person name="Lescuyer P."/>
            <person name="Hochstrasser D.F."/>
        </authorList>
    </citation>
    <scope>IDENTIFICATION BY MASS SPECTROMETRY [LARGE SCALE ANALYSIS]</scope>
    <source>
        <strain>N315</strain>
    </source>
</reference>
<protein>
    <recommendedName>
        <fullName evidence="1">Large ribosomal subunit protein uL23</fullName>
    </recommendedName>
    <alternativeName>
        <fullName evidence="2">50S ribosomal protein L23</fullName>
    </alternativeName>
</protein>
<organism>
    <name type="scientific">Staphylococcus aureus (strain N315)</name>
    <dbReference type="NCBI Taxonomy" id="158879"/>
    <lineage>
        <taxon>Bacteria</taxon>
        <taxon>Bacillati</taxon>
        <taxon>Bacillota</taxon>
        <taxon>Bacilli</taxon>
        <taxon>Bacillales</taxon>
        <taxon>Staphylococcaceae</taxon>
        <taxon>Staphylococcus</taxon>
    </lineage>
</organism>
<comment type="function">
    <text evidence="1">One of the early assembly proteins it binds 23S rRNA. One of the proteins that surrounds the polypeptide exit tunnel on the outside of the ribosome. Forms the main docking site for trigger factor binding to the ribosome.</text>
</comment>
<comment type="subunit">
    <text evidence="1">Part of the 50S ribosomal subunit. Contacts protein L29, and trigger factor when it is bound to the ribosome.</text>
</comment>
<comment type="similarity">
    <text evidence="1">Belongs to the universal ribosomal protein uL23 family.</text>
</comment>
<dbReference type="EMBL" id="BA000018">
    <property type="protein sequence ID" value="BAB43340.1"/>
    <property type="molecule type" value="Genomic_DNA"/>
</dbReference>
<dbReference type="PIR" id="C90022">
    <property type="entry name" value="C90022"/>
</dbReference>
<dbReference type="RefSeq" id="WP_000388082.1">
    <property type="nucleotide sequence ID" value="NC_002745.2"/>
</dbReference>
<dbReference type="SMR" id="Q7A459"/>
<dbReference type="EnsemblBacteria" id="BAB43340">
    <property type="protein sequence ID" value="BAB43340"/>
    <property type="gene ID" value="BAB43340"/>
</dbReference>
<dbReference type="KEGG" id="sau:SA2045"/>
<dbReference type="HOGENOM" id="CLU_037562_3_2_9"/>
<dbReference type="GO" id="GO:1990904">
    <property type="term" value="C:ribonucleoprotein complex"/>
    <property type="evidence" value="ECO:0007669"/>
    <property type="project" value="UniProtKB-KW"/>
</dbReference>
<dbReference type="GO" id="GO:0005840">
    <property type="term" value="C:ribosome"/>
    <property type="evidence" value="ECO:0007669"/>
    <property type="project" value="UniProtKB-KW"/>
</dbReference>
<dbReference type="GO" id="GO:0019843">
    <property type="term" value="F:rRNA binding"/>
    <property type="evidence" value="ECO:0007669"/>
    <property type="project" value="UniProtKB-UniRule"/>
</dbReference>
<dbReference type="GO" id="GO:0003735">
    <property type="term" value="F:structural constituent of ribosome"/>
    <property type="evidence" value="ECO:0007669"/>
    <property type="project" value="InterPro"/>
</dbReference>
<dbReference type="GO" id="GO:0006412">
    <property type="term" value="P:translation"/>
    <property type="evidence" value="ECO:0007669"/>
    <property type="project" value="UniProtKB-UniRule"/>
</dbReference>
<dbReference type="FunFam" id="3.30.70.330:FF:000001">
    <property type="entry name" value="50S ribosomal protein L23"/>
    <property type="match status" value="1"/>
</dbReference>
<dbReference type="Gene3D" id="3.30.70.330">
    <property type="match status" value="1"/>
</dbReference>
<dbReference type="HAMAP" id="MF_01369_B">
    <property type="entry name" value="Ribosomal_uL23_B"/>
    <property type="match status" value="1"/>
</dbReference>
<dbReference type="InterPro" id="IPR012677">
    <property type="entry name" value="Nucleotide-bd_a/b_plait_sf"/>
</dbReference>
<dbReference type="InterPro" id="IPR013025">
    <property type="entry name" value="Ribosomal_uL23-like"/>
</dbReference>
<dbReference type="InterPro" id="IPR012678">
    <property type="entry name" value="Ribosomal_uL23/eL15/eS24_sf"/>
</dbReference>
<dbReference type="NCBIfam" id="NF004363">
    <property type="entry name" value="PRK05738.2-4"/>
    <property type="match status" value="1"/>
</dbReference>
<dbReference type="PANTHER" id="PTHR11620">
    <property type="entry name" value="60S RIBOSOMAL PROTEIN L23A"/>
    <property type="match status" value="1"/>
</dbReference>
<dbReference type="Pfam" id="PF00276">
    <property type="entry name" value="Ribosomal_L23"/>
    <property type="match status" value="1"/>
</dbReference>
<dbReference type="SUPFAM" id="SSF54189">
    <property type="entry name" value="Ribosomal proteins S24e, L23 and L15e"/>
    <property type="match status" value="1"/>
</dbReference>